<evidence type="ECO:0000255" key="1">
    <source>
        <dbReference type="HAMAP-Rule" id="MF_00249"/>
    </source>
</evidence>
<evidence type="ECO:0000256" key="2">
    <source>
        <dbReference type="SAM" id="MobiDB-lite"/>
    </source>
</evidence>
<comment type="function">
    <text evidence="1">ATPase subunit of a proteasome-like degradation complex; this subunit has chaperone activity. The binding of ATP and its subsequent hydrolysis by HslU are essential for unfolding of protein substrates subsequently hydrolyzed by HslV. HslU recognizes the N-terminal part of its protein substrates and unfolds these before they are guided to HslV for hydrolysis.</text>
</comment>
<comment type="subunit">
    <text evidence="1">A double ring-shaped homohexamer of HslV is capped on each side by a ring-shaped HslU homohexamer. The assembly of the HslU/HslV complex is dependent on binding of ATP.</text>
</comment>
<comment type="subcellular location">
    <subcellularLocation>
        <location evidence="1">Cytoplasm</location>
    </subcellularLocation>
</comment>
<comment type="similarity">
    <text evidence="1">Belongs to the ClpX chaperone family. HslU subfamily.</text>
</comment>
<proteinExistence type="inferred from homology"/>
<protein>
    <recommendedName>
        <fullName evidence="1">ATP-dependent protease ATPase subunit HslU</fullName>
    </recommendedName>
    <alternativeName>
        <fullName evidence="1">Unfoldase HslU</fullName>
    </alternativeName>
</protein>
<sequence length="441" mass="49754">MSEMTPREIVHELDAHIIGQQKAKRSVAVALRNRWRRMQLDAALRHEVTPKNILMIGPTGVGKTEIARRLAKLANAPFIKVEATKFTEVGYVGKEVEQIIRDLTDTAIKLTREVEMKKCRTRAEEAAEERVLDALLPRPKNDWDNNSDDNSSSRQIFRKKLREGQLDDKEIEIDIAGPQIGVEIMSPPGMEEMTNQLQSLFQNMGQAPAKRKKMKIKEALKQLVDEEAAKLVNQEDLKEKAIELVEQHGIVFIDEIDKICKRGETSGPDVSREGVQRDLLPLVEGCTVNTKHGMVKTDHILFIASGAFQMSKPSDLIPELQGRLPIRVELDALTASDFKRILTEPHASLTEQYVALMATEGVTIEFTETGIDRIAQAAWQVNERTENIGARRLHTVMERLMEDISFEASDKSGSKFTIDADYVNAHLDNLVQDEDLSRFIL</sequence>
<accession>A1S2P4</accession>
<keyword id="KW-0067">ATP-binding</keyword>
<keyword id="KW-0143">Chaperone</keyword>
<keyword id="KW-0963">Cytoplasm</keyword>
<keyword id="KW-0547">Nucleotide-binding</keyword>
<keyword id="KW-1185">Reference proteome</keyword>
<keyword id="KW-0346">Stress response</keyword>
<feature type="chain" id="PRO_1000012799" description="ATP-dependent protease ATPase subunit HslU">
    <location>
        <begin position="1"/>
        <end position="441"/>
    </location>
</feature>
<feature type="region of interest" description="Disordered" evidence="2">
    <location>
        <begin position="137"/>
        <end position="156"/>
    </location>
</feature>
<feature type="binding site" evidence="1">
    <location>
        <position position="18"/>
    </location>
    <ligand>
        <name>ATP</name>
        <dbReference type="ChEBI" id="CHEBI:30616"/>
    </ligand>
</feature>
<feature type="binding site" evidence="1">
    <location>
        <begin position="60"/>
        <end position="65"/>
    </location>
    <ligand>
        <name>ATP</name>
        <dbReference type="ChEBI" id="CHEBI:30616"/>
    </ligand>
</feature>
<feature type="binding site" evidence="1">
    <location>
        <position position="254"/>
    </location>
    <ligand>
        <name>ATP</name>
        <dbReference type="ChEBI" id="CHEBI:30616"/>
    </ligand>
</feature>
<feature type="binding site" evidence="1">
    <location>
        <position position="319"/>
    </location>
    <ligand>
        <name>ATP</name>
        <dbReference type="ChEBI" id="CHEBI:30616"/>
    </ligand>
</feature>
<feature type="binding site" evidence="1">
    <location>
        <position position="391"/>
    </location>
    <ligand>
        <name>ATP</name>
        <dbReference type="ChEBI" id="CHEBI:30616"/>
    </ligand>
</feature>
<organism>
    <name type="scientific">Shewanella amazonensis (strain ATCC BAA-1098 / SB2B)</name>
    <dbReference type="NCBI Taxonomy" id="326297"/>
    <lineage>
        <taxon>Bacteria</taxon>
        <taxon>Pseudomonadati</taxon>
        <taxon>Pseudomonadota</taxon>
        <taxon>Gammaproteobacteria</taxon>
        <taxon>Alteromonadales</taxon>
        <taxon>Shewanellaceae</taxon>
        <taxon>Shewanella</taxon>
    </lineage>
</organism>
<name>HSLU_SHEAM</name>
<reference key="1">
    <citation type="submission" date="2006-12" db="EMBL/GenBank/DDBJ databases">
        <title>Complete sequence of Shewanella amazonensis SB2B.</title>
        <authorList>
            <consortium name="US DOE Joint Genome Institute"/>
            <person name="Copeland A."/>
            <person name="Lucas S."/>
            <person name="Lapidus A."/>
            <person name="Barry K."/>
            <person name="Detter J.C."/>
            <person name="Glavina del Rio T."/>
            <person name="Hammon N."/>
            <person name="Israni S."/>
            <person name="Dalin E."/>
            <person name="Tice H."/>
            <person name="Pitluck S."/>
            <person name="Munk A.C."/>
            <person name="Brettin T."/>
            <person name="Bruce D."/>
            <person name="Han C."/>
            <person name="Tapia R."/>
            <person name="Gilna P."/>
            <person name="Schmutz J."/>
            <person name="Larimer F."/>
            <person name="Land M."/>
            <person name="Hauser L."/>
            <person name="Kyrpides N."/>
            <person name="Mikhailova N."/>
            <person name="Fredrickson J."/>
            <person name="Richardson P."/>
        </authorList>
    </citation>
    <scope>NUCLEOTIDE SEQUENCE [LARGE SCALE GENOMIC DNA]</scope>
    <source>
        <strain>ATCC BAA-1098 / SB2B</strain>
    </source>
</reference>
<dbReference type="EMBL" id="CP000507">
    <property type="protein sequence ID" value="ABL98650.1"/>
    <property type="molecule type" value="Genomic_DNA"/>
</dbReference>
<dbReference type="RefSeq" id="WP_011758560.1">
    <property type="nucleotide sequence ID" value="NC_008700.1"/>
</dbReference>
<dbReference type="SMR" id="A1S2P4"/>
<dbReference type="STRING" id="326297.Sama_0440"/>
<dbReference type="KEGG" id="saz:Sama_0440"/>
<dbReference type="eggNOG" id="COG1220">
    <property type="taxonomic scope" value="Bacteria"/>
</dbReference>
<dbReference type="HOGENOM" id="CLU_033123_0_0_6"/>
<dbReference type="OrthoDB" id="9804062at2"/>
<dbReference type="Proteomes" id="UP000009175">
    <property type="component" value="Chromosome"/>
</dbReference>
<dbReference type="GO" id="GO:0009376">
    <property type="term" value="C:HslUV protease complex"/>
    <property type="evidence" value="ECO:0007669"/>
    <property type="project" value="UniProtKB-UniRule"/>
</dbReference>
<dbReference type="GO" id="GO:0005524">
    <property type="term" value="F:ATP binding"/>
    <property type="evidence" value="ECO:0007669"/>
    <property type="project" value="UniProtKB-UniRule"/>
</dbReference>
<dbReference type="GO" id="GO:0016887">
    <property type="term" value="F:ATP hydrolysis activity"/>
    <property type="evidence" value="ECO:0007669"/>
    <property type="project" value="InterPro"/>
</dbReference>
<dbReference type="GO" id="GO:0008233">
    <property type="term" value="F:peptidase activity"/>
    <property type="evidence" value="ECO:0007669"/>
    <property type="project" value="InterPro"/>
</dbReference>
<dbReference type="GO" id="GO:0036402">
    <property type="term" value="F:proteasome-activating activity"/>
    <property type="evidence" value="ECO:0007669"/>
    <property type="project" value="UniProtKB-UniRule"/>
</dbReference>
<dbReference type="GO" id="GO:0043335">
    <property type="term" value="P:protein unfolding"/>
    <property type="evidence" value="ECO:0007669"/>
    <property type="project" value="UniProtKB-UniRule"/>
</dbReference>
<dbReference type="GO" id="GO:0051603">
    <property type="term" value="P:proteolysis involved in protein catabolic process"/>
    <property type="evidence" value="ECO:0007669"/>
    <property type="project" value="TreeGrafter"/>
</dbReference>
<dbReference type="CDD" id="cd19498">
    <property type="entry name" value="RecA-like_HslU"/>
    <property type="match status" value="1"/>
</dbReference>
<dbReference type="FunFam" id="1.10.8.10:FF:000028">
    <property type="entry name" value="ATP-dependent protease ATPase subunit HslU"/>
    <property type="match status" value="1"/>
</dbReference>
<dbReference type="FunFam" id="1.10.8.60:FF:000027">
    <property type="entry name" value="ATP-dependent protease ATPase subunit HslU"/>
    <property type="match status" value="1"/>
</dbReference>
<dbReference type="FunFam" id="3.40.50.300:FF:000213">
    <property type="entry name" value="ATP-dependent protease ATPase subunit HslU"/>
    <property type="match status" value="1"/>
</dbReference>
<dbReference type="FunFam" id="3.40.50.300:FF:000220">
    <property type="entry name" value="ATP-dependent protease ATPase subunit HslU"/>
    <property type="match status" value="1"/>
</dbReference>
<dbReference type="Gene3D" id="1.10.8.60">
    <property type="match status" value="1"/>
</dbReference>
<dbReference type="Gene3D" id="3.40.50.300">
    <property type="entry name" value="P-loop containing nucleotide triphosphate hydrolases"/>
    <property type="match status" value="2"/>
</dbReference>
<dbReference type="HAMAP" id="MF_00249">
    <property type="entry name" value="HslU"/>
    <property type="match status" value="1"/>
</dbReference>
<dbReference type="InterPro" id="IPR003593">
    <property type="entry name" value="AAA+_ATPase"/>
</dbReference>
<dbReference type="InterPro" id="IPR050052">
    <property type="entry name" value="ATP-dep_Clp_protease_ClpX"/>
</dbReference>
<dbReference type="InterPro" id="IPR003959">
    <property type="entry name" value="ATPase_AAA_core"/>
</dbReference>
<dbReference type="InterPro" id="IPR019489">
    <property type="entry name" value="Clp_ATPase_C"/>
</dbReference>
<dbReference type="InterPro" id="IPR004491">
    <property type="entry name" value="HslU"/>
</dbReference>
<dbReference type="InterPro" id="IPR027417">
    <property type="entry name" value="P-loop_NTPase"/>
</dbReference>
<dbReference type="NCBIfam" id="TIGR00390">
    <property type="entry name" value="hslU"/>
    <property type="match status" value="1"/>
</dbReference>
<dbReference type="NCBIfam" id="NF003544">
    <property type="entry name" value="PRK05201.1"/>
    <property type="match status" value="1"/>
</dbReference>
<dbReference type="PANTHER" id="PTHR48102">
    <property type="entry name" value="ATP-DEPENDENT CLP PROTEASE ATP-BINDING SUBUNIT CLPX-LIKE, MITOCHONDRIAL-RELATED"/>
    <property type="match status" value="1"/>
</dbReference>
<dbReference type="PANTHER" id="PTHR48102:SF3">
    <property type="entry name" value="ATP-DEPENDENT PROTEASE ATPASE SUBUNIT HSLU"/>
    <property type="match status" value="1"/>
</dbReference>
<dbReference type="Pfam" id="PF00004">
    <property type="entry name" value="AAA"/>
    <property type="match status" value="1"/>
</dbReference>
<dbReference type="Pfam" id="PF07724">
    <property type="entry name" value="AAA_2"/>
    <property type="match status" value="1"/>
</dbReference>
<dbReference type="SMART" id="SM00382">
    <property type="entry name" value="AAA"/>
    <property type="match status" value="1"/>
</dbReference>
<dbReference type="SMART" id="SM01086">
    <property type="entry name" value="ClpB_D2-small"/>
    <property type="match status" value="1"/>
</dbReference>
<dbReference type="SUPFAM" id="SSF52540">
    <property type="entry name" value="P-loop containing nucleoside triphosphate hydrolases"/>
    <property type="match status" value="1"/>
</dbReference>
<gene>
    <name evidence="1" type="primary">hslU</name>
    <name type="ordered locus">Sama_0440</name>
</gene>